<sequence>MNIQALLSEKVSQALIAAGAPADCEPQVRQSAKVQFGDYQANGVMAVAKKLGMPPRQLAELVLTHLDLNGIANKVEIAGPGFINIFLDPAFLASHVDAALKSERLGVAQPKAETIVVDYSAPNVAKEMHVGHLRSTIIGDAAVRTLEFLGHKVIRANHVGDWGTQFGMLIAFLEKQQQENAGEMALADLEGFYREAKKHYDEDAAFAERARSYVVKLQGGDEYFREMWRKLVDITMSQNQLAYNRLNVTLTRDDVMGESLYNPMLPGIVADLKAKKLAVESEGATVVFLDEYKNKEGEPMGVIIQKKDGGYLYTTTDIACAKYRYETLHADRVLYYIDSRQHQHLMQAWTIVRKAGYVPESVPLEHHMFGMMLGKDGKPFKTRAGGTVKLSDLLDEALERARRLVAEKNPDMPAEELEKLANAVGIGAVKYADLSKNRTTDYIFDWDNMLAFEGNTAPYMQYAYTRVLSVFRKANIDESALANAAVVITEDREAQLAARLLQFEETLTVVAREGTPHVMCSYLYDLAGLFSGFYEHCPILSADNEEARNSRLKLAQLTAKTLKLGLDTLGIETVERM</sequence>
<comment type="catalytic activity">
    <reaction evidence="1">
        <text>tRNA(Arg) + L-arginine + ATP = L-arginyl-tRNA(Arg) + AMP + diphosphate</text>
        <dbReference type="Rhea" id="RHEA:20301"/>
        <dbReference type="Rhea" id="RHEA-COMP:9658"/>
        <dbReference type="Rhea" id="RHEA-COMP:9673"/>
        <dbReference type="ChEBI" id="CHEBI:30616"/>
        <dbReference type="ChEBI" id="CHEBI:32682"/>
        <dbReference type="ChEBI" id="CHEBI:33019"/>
        <dbReference type="ChEBI" id="CHEBI:78442"/>
        <dbReference type="ChEBI" id="CHEBI:78513"/>
        <dbReference type="ChEBI" id="CHEBI:456215"/>
        <dbReference type="EC" id="6.1.1.19"/>
    </reaction>
</comment>
<comment type="subunit">
    <text evidence="1">Monomer.</text>
</comment>
<comment type="subcellular location">
    <subcellularLocation>
        <location evidence="1">Cytoplasm</location>
    </subcellularLocation>
</comment>
<comment type="similarity">
    <text evidence="1">Belongs to the class-I aminoacyl-tRNA synthetase family.</text>
</comment>
<dbReference type="EC" id="6.1.1.19" evidence="1"/>
<dbReference type="EMBL" id="CP000653">
    <property type="protein sequence ID" value="ABP61111.1"/>
    <property type="molecule type" value="Genomic_DNA"/>
</dbReference>
<dbReference type="RefSeq" id="WP_015959444.1">
    <property type="nucleotide sequence ID" value="NC_009436.1"/>
</dbReference>
<dbReference type="SMR" id="A4WBN1"/>
<dbReference type="STRING" id="399742.Ent638_2442"/>
<dbReference type="KEGG" id="ent:Ent638_2442"/>
<dbReference type="eggNOG" id="COG0018">
    <property type="taxonomic scope" value="Bacteria"/>
</dbReference>
<dbReference type="HOGENOM" id="CLU_006406_5_1_6"/>
<dbReference type="OrthoDB" id="9803211at2"/>
<dbReference type="Proteomes" id="UP000000230">
    <property type="component" value="Chromosome"/>
</dbReference>
<dbReference type="GO" id="GO:0005737">
    <property type="term" value="C:cytoplasm"/>
    <property type="evidence" value="ECO:0007669"/>
    <property type="project" value="UniProtKB-SubCell"/>
</dbReference>
<dbReference type="GO" id="GO:0004814">
    <property type="term" value="F:arginine-tRNA ligase activity"/>
    <property type="evidence" value="ECO:0007669"/>
    <property type="project" value="UniProtKB-UniRule"/>
</dbReference>
<dbReference type="GO" id="GO:0005524">
    <property type="term" value="F:ATP binding"/>
    <property type="evidence" value="ECO:0007669"/>
    <property type="project" value="UniProtKB-UniRule"/>
</dbReference>
<dbReference type="GO" id="GO:0006420">
    <property type="term" value="P:arginyl-tRNA aminoacylation"/>
    <property type="evidence" value="ECO:0007669"/>
    <property type="project" value="UniProtKB-UniRule"/>
</dbReference>
<dbReference type="CDD" id="cd07956">
    <property type="entry name" value="Anticodon_Ia_Arg"/>
    <property type="match status" value="1"/>
</dbReference>
<dbReference type="CDD" id="cd00671">
    <property type="entry name" value="ArgRS_core"/>
    <property type="match status" value="1"/>
</dbReference>
<dbReference type="FunFam" id="1.10.730.10:FF:000001">
    <property type="entry name" value="Arginine--tRNA ligase"/>
    <property type="match status" value="1"/>
</dbReference>
<dbReference type="FunFam" id="3.30.1360.70:FF:000001">
    <property type="entry name" value="Arginine--tRNA ligase"/>
    <property type="match status" value="1"/>
</dbReference>
<dbReference type="FunFam" id="3.40.50.620:FF:000030">
    <property type="entry name" value="Arginine--tRNA ligase"/>
    <property type="match status" value="1"/>
</dbReference>
<dbReference type="Gene3D" id="3.30.1360.70">
    <property type="entry name" value="Arginyl tRNA synthetase N-terminal domain"/>
    <property type="match status" value="1"/>
</dbReference>
<dbReference type="Gene3D" id="3.40.50.620">
    <property type="entry name" value="HUPs"/>
    <property type="match status" value="1"/>
</dbReference>
<dbReference type="Gene3D" id="1.10.730.10">
    <property type="entry name" value="Isoleucyl-tRNA Synthetase, Domain 1"/>
    <property type="match status" value="1"/>
</dbReference>
<dbReference type="HAMAP" id="MF_00123">
    <property type="entry name" value="Arg_tRNA_synth"/>
    <property type="match status" value="1"/>
</dbReference>
<dbReference type="InterPro" id="IPR001412">
    <property type="entry name" value="aa-tRNA-synth_I_CS"/>
</dbReference>
<dbReference type="InterPro" id="IPR001278">
    <property type="entry name" value="Arg-tRNA-ligase"/>
</dbReference>
<dbReference type="InterPro" id="IPR005148">
    <property type="entry name" value="Arg-tRNA-synth_N"/>
</dbReference>
<dbReference type="InterPro" id="IPR036695">
    <property type="entry name" value="Arg-tRNA-synth_N_sf"/>
</dbReference>
<dbReference type="InterPro" id="IPR035684">
    <property type="entry name" value="ArgRS_core"/>
</dbReference>
<dbReference type="InterPro" id="IPR008909">
    <property type="entry name" value="DALR_anticod-bd"/>
</dbReference>
<dbReference type="InterPro" id="IPR014729">
    <property type="entry name" value="Rossmann-like_a/b/a_fold"/>
</dbReference>
<dbReference type="InterPro" id="IPR009080">
    <property type="entry name" value="tRNAsynth_Ia_anticodon-bd"/>
</dbReference>
<dbReference type="NCBIfam" id="TIGR00456">
    <property type="entry name" value="argS"/>
    <property type="match status" value="1"/>
</dbReference>
<dbReference type="PANTHER" id="PTHR11956:SF5">
    <property type="entry name" value="ARGININE--TRNA LIGASE, CYTOPLASMIC"/>
    <property type="match status" value="1"/>
</dbReference>
<dbReference type="PANTHER" id="PTHR11956">
    <property type="entry name" value="ARGINYL-TRNA SYNTHETASE"/>
    <property type="match status" value="1"/>
</dbReference>
<dbReference type="Pfam" id="PF03485">
    <property type="entry name" value="Arg_tRNA_synt_N"/>
    <property type="match status" value="1"/>
</dbReference>
<dbReference type="Pfam" id="PF05746">
    <property type="entry name" value="DALR_1"/>
    <property type="match status" value="1"/>
</dbReference>
<dbReference type="Pfam" id="PF00750">
    <property type="entry name" value="tRNA-synt_1d"/>
    <property type="match status" value="1"/>
</dbReference>
<dbReference type="PRINTS" id="PR01038">
    <property type="entry name" value="TRNASYNTHARG"/>
</dbReference>
<dbReference type="SMART" id="SM01016">
    <property type="entry name" value="Arg_tRNA_synt_N"/>
    <property type="match status" value="1"/>
</dbReference>
<dbReference type="SMART" id="SM00836">
    <property type="entry name" value="DALR_1"/>
    <property type="match status" value="1"/>
</dbReference>
<dbReference type="SUPFAM" id="SSF47323">
    <property type="entry name" value="Anticodon-binding domain of a subclass of class I aminoacyl-tRNA synthetases"/>
    <property type="match status" value="1"/>
</dbReference>
<dbReference type="SUPFAM" id="SSF55190">
    <property type="entry name" value="Arginyl-tRNA synthetase (ArgRS), N-terminal 'additional' domain"/>
    <property type="match status" value="1"/>
</dbReference>
<dbReference type="SUPFAM" id="SSF52374">
    <property type="entry name" value="Nucleotidylyl transferase"/>
    <property type="match status" value="1"/>
</dbReference>
<dbReference type="PROSITE" id="PS00178">
    <property type="entry name" value="AA_TRNA_LIGASE_I"/>
    <property type="match status" value="1"/>
</dbReference>
<gene>
    <name evidence="1" type="primary">argS</name>
    <name type="ordered locus">Ent638_2442</name>
</gene>
<proteinExistence type="inferred from homology"/>
<organism>
    <name type="scientific">Enterobacter sp. (strain 638)</name>
    <dbReference type="NCBI Taxonomy" id="399742"/>
    <lineage>
        <taxon>Bacteria</taxon>
        <taxon>Pseudomonadati</taxon>
        <taxon>Pseudomonadota</taxon>
        <taxon>Gammaproteobacteria</taxon>
        <taxon>Enterobacterales</taxon>
        <taxon>Enterobacteriaceae</taxon>
        <taxon>Enterobacter</taxon>
    </lineage>
</organism>
<accession>A4WBN1</accession>
<keyword id="KW-0030">Aminoacyl-tRNA synthetase</keyword>
<keyword id="KW-0067">ATP-binding</keyword>
<keyword id="KW-0963">Cytoplasm</keyword>
<keyword id="KW-0436">Ligase</keyword>
<keyword id="KW-0547">Nucleotide-binding</keyword>
<keyword id="KW-0648">Protein biosynthesis</keyword>
<protein>
    <recommendedName>
        <fullName evidence="1">Arginine--tRNA ligase</fullName>
        <ecNumber evidence="1">6.1.1.19</ecNumber>
    </recommendedName>
    <alternativeName>
        <fullName evidence="1">Arginyl-tRNA synthetase</fullName>
        <shortName evidence="1">ArgRS</shortName>
    </alternativeName>
</protein>
<evidence type="ECO:0000255" key="1">
    <source>
        <dbReference type="HAMAP-Rule" id="MF_00123"/>
    </source>
</evidence>
<feature type="chain" id="PRO_1000057810" description="Arginine--tRNA ligase">
    <location>
        <begin position="1"/>
        <end position="577"/>
    </location>
</feature>
<feature type="short sequence motif" description="'HIGH' region">
    <location>
        <begin position="122"/>
        <end position="132"/>
    </location>
</feature>
<name>SYR_ENT38</name>
<reference key="1">
    <citation type="journal article" date="2010" name="PLoS Genet.">
        <title>Genome sequence of the plant growth promoting endophytic bacterium Enterobacter sp. 638.</title>
        <authorList>
            <person name="Taghavi S."/>
            <person name="van der Lelie D."/>
            <person name="Hoffman A."/>
            <person name="Zhang Y.B."/>
            <person name="Walla M.D."/>
            <person name="Vangronsveld J."/>
            <person name="Newman L."/>
            <person name="Monchy S."/>
        </authorList>
    </citation>
    <scope>NUCLEOTIDE SEQUENCE [LARGE SCALE GENOMIC DNA]</scope>
    <source>
        <strain>638</strain>
    </source>
</reference>